<comment type="function">
    <text evidence="1">Catalyzes the reduction of 2,3-diketo-L-gulonate in the presence of NADH, to form 3-keto-L-gulonate.</text>
</comment>
<comment type="catalytic activity">
    <reaction evidence="1">
        <text>3-dehydro-L-gulonate + NAD(+) = 2,3-dioxo-L-gulonate + NADH + H(+)</text>
        <dbReference type="Rhea" id="RHEA:21924"/>
        <dbReference type="ChEBI" id="CHEBI:15378"/>
        <dbReference type="ChEBI" id="CHEBI:57441"/>
        <dbReference type="ChEBI" id="CHEBI:57540"/>
        <dbReference type="ChEBI" id="CHEBI:57655"/>
        <dbReference type="ChEBI" id="CHEBI:57945"/>
        <dbReference type="EC" id="1.1.1.130"/>
    </reaction>
</comment>
<comment type="catalytic activity">
    <reaction evidence="1">
        <text>3-dehydro-L-gulonate + NADP(+) = 2,3-dioxo-L-gulonate + NADPH + H(+)</text>
        <dbReference type="Rhea" id="RHEA:21928"/>
        <dbReference type="ChEBI" id="CHEBI:15378"/>
        <dbReference type="ChEBI" id="CHEBI:57441"/>
        <dbReference type="ChEBI" id="CHEBI:57655"/>
        <dbReference type="ChEBI" id="CHEBI:57783"/>
        <dbReference type="ChEBI" id="CHEBI:58349"/>
        <dbReference type="EC" id="1.1.1.130"/>
    </reaction>
</comment>
<comment type="subunit">
    <text evidence="1">Homodimer.</text>
</comment>
<comment type="subcellular location">
    <subcellularLocation>
        <location evidence="1">Cytoplasm</location>
    </subcellularLocation>
</comment>
<comment type="similarity">
    <text evidence="1">Belongs to the LDH2/MDH2 oxidoreductase family. DlgD subfamily.</text>
</comment>
<dbReference type="EC" id="1.1.1.130" evidence="1"/>
<dbReference type="EMBL" id="L42023">
    <property type="protein sequence ID" value="AAC22691.1"/>
    <property type="molecule type" value="Genomic_DNA"/>
</dbReference>
<dbReference type="PIR" id="C64165">
    <property type="entry name" value="C64165"/>
</dbReference>
<dbReference type="RefSeq" id="NP_439191.1">
    <property type="nucleotide sequence ID" value="NC_000907.1"/>
</dbReference>
<dbReference type="SMR" id="P44995"/>
<dbReference type="STRING" id="71421.HI_1031"/>
<dbReference type="DNASU" id="950015"/>
<dbReference type="EnsemblBacteria" id="AAC22691">
    <property type="protein sequence ID" value="AAC22691"/>
    <property type="gene ID" value="HI_1031"/>
</dbReference>
<dbReference type="KEGG" id="hin:HI_1031"/>
<dbReference type="PATRIC" id="fig|71421.8.peg.1075"/>
<dbReference type="eggNOG" id="COG2055">
    <property type="taxonomic scope" value="Bacteria"/>
</dbReference>
<dbReference type="HOGENOM" id="CLU_040452_4_0_6"/>
<dbReference type="OrthoDB" id="9811519at2"/>
<dbReference type="PhylomeDB" id="P44995"/>
<dbReference type="BioCyc" id="HINF71421:G1GJ1-1071-MONOMER"/>
<dbReference type="Proteomes" id="UP000000579">
    <property type="component" value="Chromosome"/>
</dbReference>
<dbReference type="GO" id="GO:0005737">
    <property type="term" value="C:cytoplasm"/>
    <property type="evidence" value="ECO:0007669"/>
    <property type="project" value="UniProtKB-SubCell"/>
</dbReference>
<dbReference type="GO" id="GO:0047559">
    <property type="term" value="F:3-dehydro-L-gulonate 2-dehydrogenase activity"/>
    <property type="evidence" value="ECO:0007669"/>
    <property type="project" value="UniProtKB-UniRule"/>
</dbReference>
<dbReference type="GO" id="GO:0070403">
    <property type="term" value="F:NAD+ binding"/>
    <property type="evidence" value="ECO:0007669"/>
    <property type="project" value="InterPro"/>
</dbReference>
<dbReference type="Gene3D" id="1.10.1530.10">
    <property type="match status" value="1"/>
</dbReference>
<dbReference type="Gene3D" id="3.30.1370.60">
    <property type="entry name" value="Hypothetical oxidoreductase yiak, domain 2"/>
    <property type="match status" value="1"/>
</dbReference>
<dbReference type="Gene3D" id="3.30.60.50">
    <property type="entry name" value="Hypothetical oxidoreductase yiak, domain 3"/>
    <property type="match status" value="1"/>
</dbReference>
<dbReference type="HAMAP" id="MF_00820">
    <property type="entry name" value="Diketo_gul_reduc"/>
    <property type="match status" value="1"/>
</dbReference>
<dbReference type="InterPro" id="IPR023689">
    <property type="entry name" value="Diketo_gul_Rdtase"/>
</dbReference>
<dbReference type="InterPro" id="IPR043144">
    <property type="entry name" value="Mal/L-sulf/L-lact_DH-like_ah"/>
</dbReference>
<dbReference type="InterPro" id="IPR043143">
    <property type="entry name" value="Mal/L-sulf/L-lact_DH-like_NADP"/>
</dbReference>
<dbReference type="InterPro" id="IPR036111">
    <property type="entry name" value="Mal/L-sulfo/L-lacto_DH-like_sf"/>
</dbReference>
<dbReference type="InterPro" id="IPR003767">
    <property type="entry name" value="Malate/L-lactate_DH-like"/>
</dbReference>
<dbReference type="NCBIfam" id="NF009750">
    <property type="entry name" value="PRK13260.1"/>
    <property type="match status" value="1"/>
</dbReference>
<dbReference type="PANTHER" id="PTHR11091:SF3">
    <property type="entry name" value="2,3-DIKETO-L-GULONATE REDUCTASE"/>
    <property type="match status" value="1"/>
</dbReference>
<dbReference type="PANTHER" id="PTHR11091">
    <property type="entry name" value="OXIDOREDUCTASE-RELATED"/>
    <property type="match status" value="1"/>
</dbReference>
<dbReference type="Pfam" id="PF02615">
    <property type="entry name" value="Ldh_2"/>
    <property type="match status" value="1"/>
</dbReference>
<dbReference type="SUPFAM" id="SSF89733">
    <property type="entry name" value="L-sulfolactate dehydrogenase-like"/>
    <property type="match status" value="1"/>
</dbReference>
<protein>
    <recommendedName>
        <fullName evidence="1">2,3-diketo-L-gulonate reductase</fullName>
        <shortName evidence="1">2,3-DKG reductase</shortName>
        <ecNumber evidence="1">1.1.1.130</ecNumber>
    </recommendedName>
    <alternativeName>
        <fullName evidence="1">3-dehydro-L-gulonate 2-dehydrogenase</fullName>
    </alternativeName>
</protein>
<feature type="chain" id="PRO_0000083832" description="2,3-diketo-L-gulonate reductase">
    <location>
        <begin position="1"/>
        <end position="332"/>
    </location>
</feature>
<feature type="active site" description="Proton donor" evidence="1">
    <location>
        <position position="44"/>
    </location>
</feature>
<feature type="binding site" evidence="1">
    <location>
        <begin position="168"/>
        <end position="174"/>
    </location>
    <ligand>
        <name>NAD(+)</name>
        <dbReference type="ChEBI" id="CHEBI:57540"/>
    </ligand>
</feature>
<feature type="binding site" evidence="1">
    <location>
        <begin position="224"/>
        <end position="225"/>
    </location>
    <ligand>
        <name>NAD(+)</name>
        <dbReference type="ChEBI" id="CHEBI:57540"/>
    </ligand>
</feature>
<feature type="binding site" evidence="1">
    <location>
        <begin position="304"/>
        <end position="306"/>
    </location>
    <ligand>
        <name>NAD(+)</name>
        <dbReference type="ChEBI" id="CHEBI:57540"/>
    </ligand>
</feature>
<name>DLGD_HAEIN</name>
<keyword id="KW-0963">Cytoplasm</keyword>
<keyword id="KW-0520">NAD</keyword>
<keyword id="KW-0560">Oxidoreductase</keyword>
<keyword id="KW-1185">Reference proteome</keyword>
<organism>
    <name type="scientific">Haemophilus influenzae (strain ATCC 51907 / DSM 11121 / KW20 / Rd)</name>
    <dbReference type="NCBI Taxonomy" id="71421"/>
    <lineage>
        <taxon>Bacteria</taxon>
        <taxon>Pseudomonadati</taxon>
        <taxon>Pseudomonadota</taxon>
        <taxon>Gammaproteobacteria</taxon>
        <taxon>Pasteurellales</taxon>
        <taxon>Pasteurellaceae</taxon>
        <taxon>Haemophilus</taxon>
    </lineage>
</organism>
<sequence length="332" mass="36970">MRVSYDELKNEFKRVLLDRQLTEELAEECATAFTDTTQAGAYSHGINRFPRFIQQLEQGDIVPNAIPTKVLSLGSIEQWDAHQAIGNLTAKKMMDRAIELASQHGVGVIALRNANHWMRGGSYGWQAAEKGYIGICWTNALAVMPPWGAKECRIGTNPLIIAVPTTPITMVDMSCSMYSYGMLEVHRLAGRQTFVDAGFDDEGNLTRDPSIVEKNRRLLPMGFWKGSGLSIVLDMIATLLSNGESTVAVTEDKNDEYCVSQVFIAIEVDRLIDGKSKDEKLNRIMDYVKTAERSDPTQAVRLPGHEFTTILSDNQTNGIPVDERVWAKLKTL</sequence>
<evidence type="ECO:0000255" key="1">
    <source>
        <dbReference type="HAMAP-Rule" id="MF_00820"/>
    </source>
</evidence>
<proteinExistence type="inferred from homology"/>
<accession>P44995</accession>
<gene>
    <name evidence="1" type="primary">dlgD</name>
    <name type="ordered locus">HI_1031</name>
</gene>
<reference key="1">
    <citation type="journal article" date="1995" name="Science">
        <title>Whole-genome random sequencing and assembly of Haemophilus influenzae Rd.</title>
        <authorList>
            <person name="Fleischmann R.D."/>
            <person name="Adams M.D."/>
            <person name="White O."/>
            <person name="Clayton R.A."/>
            <person name="Kirkness E.F."/>
            <person name="Kerlavage A.R."/>
            <person name="Bult C.J."/>
            <person name="Tomb J.-F."/>
            <person name="Dougherty B.A."/>
            <person name="Merrick J.M."/>
            <person name="McKenney K."/>
            <person name="Sutton G.G."/>
            <person name="FitzHugh W."/>
            <person name="Fields C.A."/>
            <person name="Gocayne J.D."/>
            <person name="Scott J.D."/>
            <person name="Shirley R."/>
            <person name="Liu L.-I."/>
            <person name="Glodek A."/>
            <person name="Kelley J.M."/>
            <person name="Weidman J.F."/>
            <person name="Phillips C.A."/>
            <person name="Spriggs T."/>
            <person name="Hedblom E."/>
            <person name="Cotton M.D."/>
            <person name="Utterback T.R."/>
            <person name="Hanna M.C."/>
            <person name="Nguyen D.T."/>
            <person name="Saudek D.M."/>
            <person name="Brandon R.C."/>
            <person name="Fine L.D."/>
            <person name="Fritchman J.L."/>
            <person name="Fuhrmann J.L."/>
            <person name="Geoghagen N.S.M."/>
            <person name="Gnehm C.L."/>
            <person name="McDonald L.A."/>
            <person name="Small K.V."/>
            <person name="Fraser C.M."/>
            <person name="Smith H.O."/>
            <person name="Venter J.C."/>
        </authorList>
    </citation>
    <scope>NUCLEOTIDE SEQUENCE [LARGE SCALE GENOMIC DNA]</scope>
    <source>
        <strain>ATCC 51907 / DSM 11121 / KW20 / Rd</strain>
    </source>
</reference>